<reference key="1">
    <citation type="submission" date="2007-06" db="EMBL/GenBank/DDBJ databases">
        <title>Complete sequence of Sinorhizobium medicae WSM419 chromosome.</title>
        <authorList>
            <consortium name="US DOE Joint Genome Institute"/>
            <person name="Copeland A."/>
            <person name="Lucas S."/>
            <person name="Lapidus A."/>
            <person name="Barry K."/>
            <person name="Glavina del Rio T."/>
            <person name="Dalin E."/>
            <person name="Tice H."/>
            <person name="Pitluck S."/>
            <person name="Chain P."/>
            <person name="Malfatti S."/>
            <person name="Shin M."/>
            <person name="Vergez L."/>
            <person name="Schmutz J."/>
            <person name="Larimer F."/>
            <person name="Land M."/>
            <person name="Hauser L."/>
            <person name="Kyrpides N."/>
            <person name="Mikhailova N."/>
            <person name="Reeve W.G."/>
            <person name="Richardson P."/>
        </authorList>
    </citation>
    <scope>NUCLEOTIDE SEQUENCE [LARGE SCALE GENOMIC DNA]</scope>
    <source>
        <strain>WSM419</strain>
    </source>
</reference>
<proteinExistence type="inferred from homology"/>
<comment type="function">
    <text evidence="1">Catalyzes the initial step of the lipid cycle reactions in the biosynthesis of the cell wall peptidoglycan: transfers peptidoglycan precursor phospho-MurNAc-pentapeptide from UDP-MurNAc-pentapeptide onto the lipid carrier undecaprenyl phosphate, yielding undecaprenyl-pyrophosphoryl-MurNAc-pentapeptide, known as lipid I.</text>
</comment>
<comment type="catalytic activity">
    <reaction evidence="1">
        <text>UDP-N-acetyl-alpha-D-muramoyl-L-alanyl-gamma-D-glutamyl-meso-2,6-diaminopimeloyl-D-alanyl-D-alanine + di-trans,octa-cis-undecaprenyl phosphate = di-trans,octa-cis-undecaprenyl diphospho-N-acetyl-alpha-D-muramoyl-L-alanyl-D-glutamyl-meso-2,6-diaminopimeloyl-D-alanyl-D-alanine + UMP</text>
        <dbReference type="Rhea" id="RHEA:28386"/>
        <dbReference type="ChEBI" id="CHEBI:57865"/>
        <dbReference type="ChEBI" id="CHEBI:60392"/>
        <dbReference type="ChEBI" id="CHEBI:61386"/>
        <dbReference type="ChEBI" id="CHEBI:61387"/>
        <dbReference type="EC" id="2.7.8.13"/>
    </reaction>
</comment>
<comment type="cofactor">
    <cofactor evidence="1">
        <name>Mg(2+)</name>
        <dbReference type="ChEBI" id="CHEBI:18420"/>
    </cofactor>
</comment>
<comment type="pathway">
    <text evidence="1">Cell wall biogenesis; peptidoglycan biosynthesis.</text>
</comment>
<comment type="subcellular location">
    <subcellularLocation>
        <location evidence="1">Cell inner membrane</location>
        <topology evidence="1">Multi-pass membrane protein</topology>
    </subcellularLocation>
</comment>
<comment type="similarity">
    <text evidence="1">Belongs to the glycosyltransferase 4 family. MraY subfamily.</text>
</comment>
<keyword id="KW-0131">Cell cycle</keyword>
<keyword id="KW-0132">Cell division</keyword>
<keyword id="KW-0997">Cell inner membrane</keyword>
<keyword id="KW-1003">Cell membrane</keyword>
<keyword id="KW-0133">Cell shape</keyword>
<keyword id="KW-0961">Cell wall biogenesis/degradation</keyword>
<keyword id="KW-0460">Magnesium</keyword>
<keyword id="KW-0472">Membrane</keyword>
<keyword id="KW-0479">Metal-binding</keyword>
<keyword id="KW-0573">Peptidoglycan synthesis</keyword>
<keyword id="KW-0808">Transferase</keyword>
<keyword id="KW-0812">Transmembrane</keyword>
<keyword id="KW-1133">Transmembrane helix</keyword>
<evidence type="ECO:0000255" key="1">
    <source>
        <dbReference type="HAMAP-Rule" id="MF_00038"/>
    </source>
</evidence>
<accession>A6UB88</accession>
<dbReference type="EC" id="2.7.8.13" evidence="1"/>
<dbReference type="EMBL" id="CP000738">
    <property type="protein sequence ID" value="ABR60918.1"/>
    <property type="molecule type" value="Genomic_DNA"/>
</dbReference>
<dbReference type="RefSeq" id="WP_011976215.1">
    <property type="nucleotide sequence ID" value="NC_009636.1"/>
</dbReference>
<dbReference type="RefSeq" id="YP_001327753.1">
    <property type="nucleotide sequence ID" value="NC_009636.1"/>
</dbReference>
<dbReference type="SMR" id="A6UB88"/>
<dbReference type="STRING" id="366394.Smed_2085"/>
<dbReference type="GeneID" id="61612994"/>
<dbReference type="KEGG" id="smd:Smed_2085"/>
<dbReference type="PATRIC" id="fig|366394.8.peg.5243"/>
<dbReference type="eggNOG" id="COG0472">
    <property type="taxonomic scope" value="Bacteria"/>
</dbReference>
<dbReference type="HOGENOM" id="CLU_023982_0_0_5"/>
<dbReference type="OrthoDB" id="9805475at2"/>
<dbReference type="UniPathway" id="UPA00219"/>
<dbReference type="Proteomes" id="UP000001108">
    <property type="component" value="Chromosome"/>
</dbReference>
<dbReference type="GO" id="GO:0005886">
    <property type="term" value="C:plasma membrane"/>
    <property type="evidence" value="ECO:0007669"/>
    <property type="project" value="UniProtKB-SubCell"/>
</dbReference>
<dbReference type="GO" id="GO:0046872">
    <property type="term" value="F:metal ion binding"/>
    <property type="evidence" value="ECO:0007669"/>
    <property type="project" value="UniProtKB-KW"/>
</dbReference>
<dbReference type="GO" id="GO:0008963">
    <property type="term" value="F:phospho-N-acetylmuramoyl-pentapeptide-transferase activity"/>
    <property type="evidence" value="ECO:0007669"/>
    <property type="project" value="UniProtKB-UniRule"/>
</dbReference>
<dbReference type="GO" id="GO:0051992">
    <property type="term" value="F:UDP-N-acetylmuramoyl-L-alanyl-D-glutamyl-meso-2,6-diaminopimelyl-D-alanyl-D-alanine:undecaprenyl-phosphate transferase activity"/>
    <property type="evidence" value="ECO:0007669"/>
    <property type="project" value="RHEA"/>
</dbReference>
<dbReference type="GO" id="GO:0051301">
    <property type="term" value="P:cell division"/>
    <property type="evidence" value="ECO:0007669"/>
    <property type="project" value="UniProtKB-KW"/>
</dbReference>
<dbReference type="GO" id="GO:0071555">
    <property type="term" value="P:cell wall organization"/>
    <property type="evidence" value="ECO:0007669"/>
    <property type="project" value="UniProtKB-KW"/>
</dbReference>
<dbReference type="GO" id="GO:0009252">
    <property type="term" value="P:peptidoglycan biosynthetic process"/>
    <property type="evidence" value="ECO:0007669"/>
    <property type="project" value="UniProtKB-UniRule"/>
</dbReference>
<dbReference type="GO" id="GO:0008360">
    <property type="term" value="P:regulation of cell shape"/>
    <property type="evidence" value="ECO:0007669"/>
    <property type="project" value="UniProtKB-KW"/>
</dbReference>
<dbReference type="CDD" id="cd06852">
    <property type="entry name" value="GT_MraY"/>
    <property type="match status" value="1"/>
</dbReference>
<dbReference type="HAMAP" id="MF_00038">
    <property type="entry name" value="MraY"/>
    <property type="match status" value="1"/>
</dbReference>
<dbReference type="InterPro" id="IPR000715">
    <property type="entry name" value="Glycosyl_transferase_4"/>
</dbReference>
<dbReference type="InterPro" id="IPR003524">
    <property type="entry name" value="PNAcMuramoyl-5peptid_Trfase"/>
</dbReference>
<dbReference type="InterPro" id="IPR018480">
    <property type="entry name" value="PNAcMuramoyl-5peptid_Trfase_CS"/>
</dbReference>
<dbReference type="NCBIfam" id="TIGR00445">
    <property type="entry name" value="mraY"/>
    <property type="match status" value="1"/>
</dbReference>
<dbReference type="PANTHER" id="PTHR22926">
    <property type="entry name" value="PHOSPHO-N-ACETYLMURAMOYL-PENTAPEPTIDE-TRANSFERASE"/>
    <property type="match status" value="1"/>
</dbReference>
<dbReference type="PANTHER" id="PTHR22926:SF5">
    <property type="entry name" value="PHOSPHO-N-ACETYLMURAMOYL-PENTAPEPTIDE-TRANSFERASE HOMOLOG"/>
    <property type="match status" value="1"/>
</dbReference>
<dbReference type="Pfam" id="PF00953">
    <property type="entry name" value="Glycos_transf_4"/>
    <property type="match status" value="1"/>
</dbReference>
<dbReference type="Pfam" id="PF10555">
    <property type="entry name" value="MraY_sig1"/>
    <property type="match status" value="1"/>
</dbReference>
<dbReference type="PROSITE" id="PS01347">
    <property type="entry name" value="MRAY_1"/>
    <property type="match status" value="1"/>
</dbReference>
<dbReference type="PROSITE" id="PS01348">
    <property type="entry name" value="MRAY_2"/>
    <property type="match status" value="1"/>
</dbReference>
<name>MRAY_SINMW</name>
<organism>
    <name type="scientific">Sinorhizobium medicae (strain WSM419)</name>
    <name type="common">Ensifer medicae</name>
    <dbReference type="NCBI Taxonomy" id="366394"/>
    <lineage>
        <taxon>Bacteria</taxon>
        <taxon>Pseudomonadati</taxon>
        <taxon>Pseudomonadota</taxon>
        <taxon>Alphaproteobacteria</taxon>
        <taxon>Hyphomicrobiales</taxon>
        <taxon>Rhizobiaceae</taxon>
        <taxon>Sinorhizobium/Ensifer group</taxon>
        <taxon>Sinorhizobium</taxon>
    </lineage>
</organism>
<sequence>MLIWLVELADHFQFFNLFRYITFRTGAALFTSALIVFLFGPAMIASLRIRQGKGQPIRADGPQTHFKKAGTPTMGGLMILAGIVVSSLLWADLSSIYVVSTLLVTLGFGAIGFYDDYLKVTKQSDKGFSGKARLGIEFVIASIAVFFMMQAALSAGAAGSTFGSSVTFPFFKDLMLNLGYFFVLFGGFVIVGAGNSVNLTDGLDGLAIVPVMIASAAFGLIAYLAGNAVFANYLQIHFVPGTGELAVILGAVIGAGLGFLWFNAPPAAIFMGDTGSLALGGLIGTVAVATKHEIVMVIIGGLFVMETLSVIIQVFWFKRTGHRVFLMAPIHHHFEKKGWTESQVVIRFWIIAVILAMVGLSTLKLR</sequence>
<feature type="chain" id="PRO_1000003067" description="Phospho-N-acetylmuramoyl-pentapeptide-transferase">
    <location>
        <begin position="1"/>
        <end position="366"/>
    </location>
</feature>
<feature type="transmembrane region" description="Helical" evidence="1">
    <location>
        <begin position="27"/>
        <end position="47"/>
    </location>
</feature>
<feature type="transmembrane region" description="Helical" evidence="1">
    <location>
        <begin position="71"/>
        <end position="91"/>
    </location>
</feature>
<feature type="transmembrane region" description="Helical" evidence="1">
    <location>
        <begin position="93"/>
        <end position="113"/>
    </location>
</feature>
<feature type="transmembrane region" description="Helical" evidence="1">
    <location>
        <begin position="138"/>
        <end position="158"/>
    </location>
</feature>
<feature type="transmembrane region" description="Helical" evidence="1">
    <location>
        <begin position="174"/>
        <end position="194"/>
    </location>
</feature>
<feature type="transmembrane region" description="Helical" evidence="1">
    <location>
        <begin position="205"/>
        <end position="225"/>
    </location>
</feature>
<feature type="transmembrane region" description="Helical" evidence="1">
    <location>
        <begin position="245"/>
        <end position="265"/>
    </location>
</feature>
<feature type="transmembrane region" description="Helical" evidence="1">
    <location>
        <begin position="268"/>
        <end position="288"/>
    </location>
</feature>
<feature type="transmembrane region" description="Helical" evidence="1">
    <location>
        <begin position="297"/>
        <end position="317"/>
    </location>
</feature>
<feature type="transmembrane region" description="Helical" evidence="1">
    <location>
        <begin position="343"/>
        <end position="363"/>
    </location>
</feature>
<gene>
    <name evidence="1" type="primary">mraY</name>
    <name type="ordered locus">Smed_2085</name>
</gene>
<protein>
    <recommendedName>
        <fullName evidence="1">Phospho-N-acetylmuramoyl-pentapeptide-transferase</fullName>
        <ecNumber evidence="1">2.7.8.13</ecNumber>
    </recommendedName>
    <alternativeName>
        <fullName evidence="1">UDP-MurNAc-pentapeptide phosphotransferase</fullName>
    </alternativeName>
</protein>